<keyword id="KW-0025">Alternative splicing</keyword>
<keyword id="KW-0175">Coiled coil</keyword>
<keyword id="KW-0333">Golgi apparatus</keyword>
<keyword id="KW-0597">Phosphoprotein</keyword>
<keyword id="KW-1185">Reference proteome</keyword>
<feature type="chain" id="PRO_0000323012" description="Janus kinase and microtubule-interacting protein 3">
    <location>
        <begin position="1"/>
        <end position="844"/>
    </location>
</feature>
<feature type="region of interest" description="Disordered" evidence="2">
    <location>
        <begin position="249"/>
        <end position="290"/>
    </location>
</feature>
<feature type="region of interest" description="Disordered" evidence="2">
    <location>
        <begin position="466"/>
        <end position="488"/>
    </location>
</feature>
<feature type="coiled-coil region" evidence="1">
    <location>
        <begin position="8"/>
        <end position="259"/>
    </location>
</feature>
<feature type="coiled-coil region" evidence="1">
    <location>
        <begin position="289"/>
        <end position="421"/>
    </location>
</feature>
<feature type="coiled-coil region" evidence="1">
    <location>
        <begin position="493"/>
        <end position="621"/>
    </location>
</feature>
<feature type="coiled-coil region" evidence="1">
    <location>
        <begin position="688"/>
        <end position="833"/>
    </location>
</feature>
<feature type="compositionally biased region" description="Basic and acidic residues" evidence="2">
    <location>
        <begin position="254"/>
        <end position="267"/>
    </location>
</feature>
<feature type="compositionally biased region" description="Low complexity" evidence="2">
    <location>
        <begin position="270"/>
        <end position="282"/>
    </location>
</feature>
<feature type="compositionally biased region" description="Polar residues" evidence="2">
    <location>
        <begin position="466"/>
        <end position="483"/>
    </location>
</feature>
<feature type="modified residue" description="Phosphoserine" evidence="6">
    <location>
        <position position="384"/>
    </location>
</feature>
<feature type="splice variant" id="VSP_032000" description="In isoform 2." evidence="4">
    <location>
        <begin position="212"/>
        <end position="285"/>
    </location>
</feature>
<feature type="splice variant" id="VSP_032001" description="In isoform 3." evidence="4">
    <location>
        <begin position="212"/>
        <end position="283"/>
    </location>
</feature>
<feature type="splice variant" id="VSP_032002" description="In isoform 2 and isoform 3." evidence="4">
    <original>T</original>
    <variation>V</variation>
    <location>
        <position position="535"/>
    </location>
</feature>
<feature type="splice variant" id="VSP_032003" description="In isoform 2 and isoform 3." evidence="4">
    <location>
        <begin position="536"/>
        <end position="844"/>
    </location>
</feature>
<feature type="sequence conflict" description="In Ref. 3; BAB31115." evidence="5" ref="3">
    <original>L</original>
    <variation>F</variation>
    <location>
        <position position="229"/>
    </location>
</feature>
<organism>
    <name type="scientific">Mus musculus</name>
    <name type="common">Mouse</name>
    <dbReference type="NCBI Taxonomy" id="10090"/>
    <lineage>
        <taxon>Eukaryota</taxon>
        <taxon>Metazoa</taxon>
        <taxon>Chordata</taxon>
        <taxon>Craniata</taxon>
        <taxon>Vertebrata</taxon>
        <taxon>Euteleostomi</taxon>
        <taxon>Mammalia</taxon>
        <taxon>Eutheria</taxon>
        <taxon>Euarchontoglires</taxon>
        <taxon>Glires</taxon>
        <taxon>Rodentia</taxon>
        <taxon>Myomorpha</taxon>
        <taxon>Muroidea</taxon>
        <taxon>Muridae</taxon>
        <taxon>Murinae</taxon>
        <taxon>Mus</taxon>
        <taxon>Mus</taxon>
    </lineage>
</organism>
<reference key="1">
    <citation type="submission" date="2005-02" db="EMBL/GenBank/DDBJ databases">
        <title>Prediction of the coding sequences of mouse homologues of KIAA gene. The complete nucleotide sequences of mouse KIAA-homologous cDNAs identified by screening of terminal sequences of cDNA clones randomly sampled from size-fractionated libraries.</title>
        <authorList>
            <person name="Okazaki N."/>
            <person name="Kikuno R.F."/>
            <person name="Ohara R."/>
            <person name="Inamoto S."/>
            <person name="Nagase T."/>
            <person name="Ohara O."/>
            <person name="Koga H."/>
        </authorList>
    </citation>
    <scope>NUCLEOTIDE SEQUENCE [LARGE SCALE MRNA] (ISOFORM 1)</scope>
</reference>
<reference key="2">
    <citation type="journal article" date="2004" name="Genome Res.">
        <title>The status, quality, and expansion of the NIH full-length cDNA project: the Mammalian Gene Collection (MGC).</title>
        <authorList>
            <consortium name="The MGC Project Team"/>
        </authorList>
    </citation>
    <scope>NUCLEOTIDE SEQUENCE [LARGE SCALE MRNA] (ISOFORMS 2 AND 3)</scope>
</reference>
<reference key="3">
    <citation type="journal article" date="2005" name="Science">
        <title>The transcriptional landscape of the mammalian genome.</title>
        <authorList>
            <person name="Carninci P."/>
            <person name="Kasukawa T."/>
            <person name="Katayama S."/>
            <person name="Gough J."/>
            <person name="Frith M.C."/>
            <person name="Maeda N."/>
            <person name="Oyama R."/>
            <person name="Ravasi T."/>
            <person name="Lenhard B."/>
            <person name="Wells C."/>
            <person name="Kodzius R."/>
            <person name="Shimokawa K."/>
            <person name="Bajic V.B."/>
            <person name="Brenner S.E."/>
            <person name="Batalov S."/>
            <person name="Forrest A.R."/>
            <person name="Zavolan M."/>
            <person name="Davis M.J."/>
            <person name="Wilming L.G."/>
            <person name="Aidinis V."/>
            <person name="Allen J.E."/>
            <person name="Ambesi-Impiombato A."/>
            <person name="Apweiler R."/>
            <person name="Aturaliya R.N."/>
            <person name="Bailey T.L."/>
            <person name="Bansal M."/>
            <person name="Baxter L."/>
            <person name="Beisel K.W."/>
            <person name="Bersano T."/>
            <person name="Bono H."/>
            <person name="Chalk A.M."/>
            <person name="Chiu K.P."/>
            <person name="Choudhary V."/>
            <person name="Christoffels A."/>
            <person name="Clutterbuck D.R."/>
            <person name="Crowe M.L."/>
            <person name="Dalla E."/>
            <person name="Dalrymple B.P."/>
            <person name="de Bono B."/>
            <person name="Della Gatta G."/>
            <person name="di Bernardo D."/>
            <person name="Down T."/>
            <person name="Engstrom P."/>
            <person name="Fagiolini M."/>
            <person name="Faulkner G."/>
            <person name="Fletcher C.F."/>
            <person name="Fukushima T."/>
            <person name="Furuno M."/>
            <person name="Futaki S."/>
            <person name="Gariboldi M."/>
            <person name="Georgii-Hemming P."/>
            <person name="Gingeras T.R."/>
            <person name="Gojobori T."/>
            <person name="Green R.E."/>
            <person name="Gustincich S."/>
            <person name="Harbers M."/>
            <person name="Hayashi Y."/>
            <person name="Hensch T.K."/>
            <person name="Hirokawa N."/>
            <person name="Hill D."/>
            <person name="Huminiecki L."/>
            <person name="Iacono M."/>
            <person name="Ikeo K."/>
            <person name="Iwama A."/>
            <person name="Ishikawa T."/>
            <person name="Jakt M."/>
            <person name="Kanapin A."/>
            <person name="Katoh M."/>
            <person name="Kawasawa Y."/>
            <person name="Kelso J."/>
            <person name="Kitamura H."/>
            <person name="Kitano H."/>
            <person name="Kollias G."/>
            <person name="Krishnan S.P."/>
            <person name="Kruger A."/>
            <person name="Kummerfeld S.K."/>
            <person name="Kurochkin I.V."/>
            <person name="Lareau L.F."/>
            <person name="Lazarevic D."/>
            <person name="Lipovich L."/>
            <person name="Liu J."/>
            <person name="Liuni S."/>
            <person name="McWilliam S."/>
            <person name="Madan Babu M."/>
            <person name="Madera M."/>
            <person name="Marchionni L."/>
            <person name="Matsuda H."/>
            <person name="Matsuzawa S."/>
            <person name="Miki H."/>
            <person name="Mignone F."/>
            <person name="Miyake S."/>
            <person name="Morris K."/>
            <person name="Mottagui-Tabar S."/>
            <person name="Mulder N."/>
            <person name="Nakano N."/>
            <person name="Nakauchi H."/>
            <person name="Ng P."/>
            <person name="Nilsson R."/>
            <person name="Nishiguchi S."/>
            <person name="Nishikawa S."/>
            <person name="Nori F."/>
            <person name="Ohara O."/>
            <person name="Okazaki Y."/>
            <person name="Orlando V."/>
            <person name="Pang K.C."/>
            <person name="Pavan W.J."/>
            <person name="Pavesi G."/>
            <person name="Pesole G."/>
            <person name="Petrovsky N."/>
            <person name="Piazza S."/>
            <person name="Reed J."/>
            <person name="Reid J.F."/>
            <person name="Ring B.Z."/>
            <person name="Ringwald M."/>
            <person name="Rost B."/>
            <person name="Ruan Y."/>
            <person name="Salzberg S.L."/>
            <person name="Sandelin A."/>
            <person name="Schneider C."/>
            <person name="Schoenbach C."/>
            <person name="Sekiguchi K."/>
            <person name="Semple C.A."/>
            <person name="Seno S."/>
            <person name="Sessa L."/>
            <person name="Sheng Y."/>
            <person name="Shibata Y."/>
            <person name="Shimada H."/>
            <person name="Shimada K."/>
            <person name="Silva D."/>
            <person name="Sinclair B."/>
            <person name="Sperling S."/>
            <person name="Stupka E."/>
            <person name="Sugiura K."/>
            <person name="Sultana R."/>
            <person name="Takenaka Y."/>
            <person name="Taki K."/>
            <person name="Tammoja K."/>
            <person name="Tan S.L."/>
            <person name="Tang S."/>
            <person name="Taylor M.S."/>
            <person name="Tegner J."/>
            <person name="Teichmann S.A."/>
            <person name="Ueda H.R."/>
            <person name="van Nimwegen E."/>
            <person name="Verardo R."/>
            <person name="Wei C.L."/>
            <person name="Yagi K."/>
            <person name="Yamanishi H."/>
            <person name="Zabarovsky E."/>
            <person name="Zhu S."/>
            <person name="Zimmer A."/>
            <person name="Hide W."/>
            <person name="Bult C."/>
            <person name="Grimmond S.M."/>
            <person name="Teasdale R.D."/>
            <person name="Liu E.T."/>
            <person name="Brusic V."/>
            <person name="Quackenbush J."/>
            <person name="Wahlestedt C."/>
            <person name="Mattick J.S."/>
            <person name="Hume D.A."/>
            <person name="Kai C."/>
            <person name="Sasaki D."/>
            <person name="Tomaru Y."/>
            <person name="Fukuda S."/>
            <person name="Kanamori-Katayama M."/>
            <person name="Suzuki M."/>
            <person name="Aoki J."/>
            <person name="Arakawa T."/>
            <person name="Iida J."/>
            <person name="Imamura K."/>
            <person name="Itoh M."/>
            <person name="Kato T."/>
            <person name="Kawaji H."/>
            <person name="Kawagashira N."/>
            <person name="Kawashima T."/>
            <person name="Kojima M."/>
            <person name="Kondo S."/>
            <person name="Konno H."/>
            <person name="Nakano K."/>
            <person name="Ninomiya N."/>
            <person name="Nishio T."/>
            <person name="Okada M."/>
            <person name="Plessy C."/>
            <person name="Shibata K."/>
            <person name="Shiraki T."/>
            <person name="Suzuki S."/>
            <person name="Tagami M."/>
            <person name="Waki K."/>
            <person name="Watahiki A."/>
            <person name="Okamura-Oho Y."/>
            <person name="Suzuki H."/>
            <person name="Kawai J."/>
            <person name="Hayashizaki Y."/>
        </authorList>
    </citation>
    <scope>NUCLEOTIDE SEQUENCE [LARGE SCALE MRNA] OF 1-437 (ISOFORM 1)</scope>
    <source>
        <strain>C57BL/6J</strain>
        <tissue>Medulla oblongata</tissue>
    </source>
</reference>
<reference key="4">
    <citation type="journal article" date="2007" name="FEBS Lett.">
        <title>Identification and characterization of two novel (neuro)endocrine long coiled-coil proteins.</title>
        <authorList>
            <person name="Cruz-Garcia D."/>
            <person name="Vazquez-Martinez R."/>
            <person name="Peinado J.R."/>
            <person name="Anouar Y."/>
            <person name="Tonon M.C."/>
            <person name="Vaudry H."/>
            <person name="Castano J.P."/>
            <person name="Malagon M.M."/>
        </authorList>
    </citation>
    <scope>SUBCELLULAR LOCATION</scope>
</reference>
<reference key="5">
    <citation type="journal article" date="2010" name="Cell">
        <title>A tissue-specific atlas of mouse protein phosphorylation and expression.</title>
        <authorList>
            <person name="Huttlin E.L."/>
            <person name="Jedrychowski M.P."/>
            <person name="Elias J.E."/>
            <person name="Goswami T."/>
            <person name="Rad R."/>
            <person name="Beausoleil S.A."/>
            <person name="Villen J."/>
            <person name="Haas W."/>
            <person name="Sowa M.E."/>
            <person name="Gygi S.P."/>
        </authorList>
    </citation>
    <scope>PHOSPHORYLATION [LARGE SCALE ANALYSIS] AT SER-384</scope>
    <scope>IDENTIFICATION BY MASS SPECTROMETRY [LARGE SCALE ANALYSIS]</scope>
    <source>
        <tissue>Brain</tissue>
    </source>
</reference>
<protein>
    <recommendedName>
        <fullName>Janus kinase and microtubule-interacting protein 3</fullName>
    </recommendedName>
    <alternativeName>
        <fullName>Neuroendocrine long coiled-coil protein 2</fullName>
    </alternativeName>
</protein>
<gene>
    <name type="primary">Jakmip3</name>
    <name type="synonym">Kiaa4091</name>
    <name type="synonym">Necc2</name>
</gene>
<proteinExistence type="evidence at protein level"/>
<comment type="subcellular location">
    <subcellularLocation>
        <location evidence="3">Golgi apparatus</location>
    </subcellularLocation>
</comment>
<comment type="alternative products">
    <event type="alternative splicing"/>
    <isoform>
        <id>Q5DTN8-1</id>
        <name>1</name>
        <sequence type="displayed"/>
    </isoform>
    <isoform>
        <id>Q5DTN8-2</id>
        <name>2</name>
        <sequence type="described" ref="VSP_032000 VSP_032002 VSP_032003"/>
    </isoform>
    <isoform>
        <id>Q5DTN8-3</id>
        <name>3</name>
        <sequence type="described" ref="VSP_032001 VSP_032002 VSP_032003"/>
    </isoform>
</comment>
<comment type="miscellaneous">
    <molecule>Isoform 2</molecule>
    <text evidence="5">Due to intron retention.</text>
</comment>
<comment type="miscellaneous">
    <molecule>Isoform 3</molecule>
    <text evidence="5">Due to intron retention.</text>
</comment>
<comment type="similarity">
    <text evidence="5">Belongs to the JAKMIP family.</text>
</comment>
<comment type="sequence caution" evidence="5">
    <conflict type="erroneous initiation">
        <sequence resource="EMBL-CDS" id="BAD90506"/>
    </conflict>
</comment>
<sequence>MSKKGAGSRAKGDKAETLAALQAANEELRAKLTDIQIELQQEKSKVSKVEREKSQELKQVREHEQRKHAVLVTELKTKLHEEKMKELQAVREALLRQHEAELLRVIKIKDNENQRLQALLNTLRDGAPDKVKTVLLCEAKEEAKKGFEVEKVKMQQEISELKGAKKQVEEALTMVIQADKIKAAEIRSVYHLHQEEITRIKKECEREIRRLMEEIRFKDRAVFVLERELGVQAGHAQRLQLQKEALDEQLSQAKEAERHPGSPRRELPYASGAGDASDHSGSPEQQLDEKDARRFQLKIAELSAIIRKLEDRNALLSEERNELLKRLREAESQYKPLLDKNKRLTRKNEDLSHTLRRIESKLKFVTQENIEMRQRAGIIRRPSSLNDLDQSQDEREIDFLKLQIVEQQNLIDELSKTLETAGYVKSVLERDKLLRYRKQRKKMAKLPKPVVVETFFGYDEEASLESDGSSISYQTDRTDQTPCTPEDDLEEGMAKEETELRFRQLTMEYQALQRAYALLQEQVGGTLDAEREVKTREQLQAEIQRAQTRVEDLEKALAEQGQDMKWIEEKQALYRRNQELVEKIKQMETEEARLKHEVQDAKDQNELLEFRILELEERERKSPAINFHHTPFVDGKSPLQVYCEAEGVTDILVTELMKKLDILGDNANLTNEEQVVVIQARTVLTLAEKWLQRIEETESALQRKMVDLESEKELFSKQKGYLDEELDYRKQALDQAHKHILELEAMLYDALQQEAGAKVAELLSEEEREKLKVAVEQWKRQVMSELRERDAQILRERMELLQIAQQRIKELEERIETQKRQIKELEEKFLFLFLFFSLAFILWS</sequence>
<evidence type="ECO:0000255" key="1"/>
<evidence type="ECO:0000256" key="2">
    <source>
        <dbReference type="SAM" id="MobiDB-lite"/>
    </source>
</evidence>
<evidence type="ECO:0000269" key="3">
    <source>
    </source>
</evidence>
<evidence type="ECO:0000303" key="4">
    <source>
    </source>
</evidence>
<evidence type="ECO:0000305" key="5"/>
<evidence type="ECO:0007744" key="6">
    <source>
    </source>
</evidence>
<dbReference type="EMBL" id="AK220482">
    <property type="protein sequence ID" value="BAD90506.1"/>
    <property type="status" value="ALT_INIT"/>
    <property type="molecule type" value="mRNA"/>
</dbReference>
<dbReference type="EMBL" id="BC119557">
    <property type="protein sequence ID" value="AAI19558.1"/>
    <property type="molecule type" value="mRNA"/>
</dbReference>
<dbReference type="EMBL" id="BC119558">
    <property type="protein sequence ID" value="AAI19559.1"/>
    <property type="molecule type" value="mRNA"/>
</dbReference>
<dbReference type="EMBL" id="AK018189">
    <property type="protein sequence ID" value="BAB31115.2"/>
    <property type="molecule type" value="mRNA"/>
</dbReference>
<dbReference type="RefSeq" id="NP_082984.1">
    <molecule id="Q5DTN8-1"/>
    <property type="nucleotide sequence ID" value="NM_028708.2"/>
</dbReference>
<dbReference type="RefSeq" id="XP_036009382.1">
    <molecule id="Q5DTN8-3"/>
    <property type="nucleotide sequence ID" value="XM_036153489.1"/>
</dbReference>
<dbReference type="RefSeq" id="XP_036009384.1">
    <molecule id="Q5DTN8-2"/>
    <property type="nucleotide sequence ID" value="XM_036153491.1"/>
</dbReference>
<dbReference type="SMR" id="Q5DTN8"/>
<dbReference type="BioGRID" id="216415">
    <property type="interactions" value="2"/>
</dbReference>
<dbReference type="FunCoup" id="Q5DTN8">
    <property type="interactions" value="46"/>
</dbReference>
<dbReference type="IntAct" id="Q5DTN8">
    <property type="interactions" value="1"/>
</dbReference>
<dbReference type="STRING" id="10090.ENSMUSP00000130207"/>
<dbReference type="GlyGen" id="Q5DTN8">
    <property type="glycosylation" value="1 site, 1 O-linked glycan (1 site)"/>
</dbReference>
<dbReference type="iPTMnet" id="Q5DTN8"/>
<dbReference type="PhosphoSitePlus" id="Q5DTN8"/>
<dbReference type="PaxDb" id="10090-ENSMUSP00000130207"/>
<dbReference type="ProteomicsDB" id="269363">
    <molecule id="Q5DTN8-1"/>
</dbReference>
<dbReference type="ProteomicsDB" id="269364">
    <molecule id="Q5DTN8-2"/>
</dbReference>
<dbReference type="ProteomicsDB" id="269365">
    <molecule id="Q5DTN8-3"/>
</dbReference>
<dbReference type="Pumba" id="Q5DTN8"/>
<dbReference type="Antibodypedia" id="19297">
    <property type="antibodies" value="20 antibodies from 10 providers"/>
</dbReference>
<dbReference type="Ensembl" id="ENSMUST00000166163.4">
    <molecule id="Q5DTN8-1"/>
    <property type="protein sequence ID" value="ENSMUSP00000130207.4"/>
    <property type="gene ID" value="ENSMUSG00000056856.15"/>
</dbReference>
<dbReference type="GeneID" id="74004"/>
<dbReference type="KEGG" id="mmu:74004"/>
<dbReference type="UCSC" id="uc029wpf.2">
    <molecule id="Q5DTN8-1"/>
    <property type="organism name" value="mouse"/>
</dbReference>
<dbReference type="UCSC" id="uc033jcq.1">
    <molecule id="Q5DTN8-3"/>
    <property type="organism name" value="mouse"/>
</dbReference>
<dbReference type="UCSC" id="uc033jcr.1">
    <molecule id="Q5DTN8-2"/>
    <property type="organism name" value="mouse"/>
</dbReference>
<dbReference type="AGR" id="MGI:1921254"/>
<dbReference type="CTD" id="282973"/>
<dbReference type="MGI" id="MGI:1921254">
    <property type="gene designation" value="Jakmip3"/>
</dbReference>
<dbReference type="VEuPathDB" id="HostDB:ENSMUSG00000056856"/>
<dbReference type="eggNOG" id="ENOG502QRTR">
    <property type="taxonomic scope" value="Eukaryota"/>
</dbReference>
<dbReference type="GeneTree" id="ENSGT00940000153713"/>
<dbReference type="InParanoid" id="Q5DTN8"/>
<dbReference type="OMA" id="MAQQRIK"/>
<dbReference type="OrthoDB" id="6424487at2759"/>
<dbReference type="PhylomeDB" id="Q5DTN8"/>
<dbReference type="BioGRID-ORCS" id="74004">
    <property type="hits" value="1 hit in 23 CRISPR screens"/>
</dbReference>
<dbReference type="ChiTaRS" id="Jakmip3">
    <property type="organism name" value="mouse"/>
</dbReference>
<dbReference type="PRO" id="PR:Q5DTN8"/>
<dbReference type="Proteomes" id="UP000000589">
    <property type="component" value="Chromosome 7"/>
</dbReference>
<dbReference type="RNAct" id="Q5DTN8">
    <property type="molecule type" value="protein"/>
</dbReference>
<dbReference type="Bgee" id="ENSMUSG00000056856">
    <property type="expression patterns" value="Expressed in hypothalamus and 33 other cell types or tissues"/>
</dbReference>
<dbReference type="ExpressionAtlas" id="Q5DTN8">
    <property type="expression patterns" value="baseline and differential"/>
</dbReference>
<dbReference type="GO" id="GO:0005794">
    <property type="term" value="C:Golgi apparatus"/>
    <property type="evidence" value="ECO:0007669"/>
    <property type="project" value="UniProtKB-SubCell"/>
</dbReference>
<dbReference type="GO" id="GO:0019900">
    <property type="term" value="F:kinase binding"/>
    <property type="evidence" value="ECO:0007669"/>
    <property type="project" value="InterPro"/>
</dbReference>
<dbReference type="GO" id="GO:0008017">
    <property type="term" value="F:microtubule binding"/>
    <property type="evidence" value="ECO:0007669"/>
    <property type="project" value="InterPro"/>
</dbReference>
<dbReference type="InterPro" id="IPR024836">
    <property type="entry name" value="JAKMIP"/>
</dbReference>
<dbReference type="InterPro" id="IPR031994">
    <property type="entry name" value="JAKMIP_C"/>
</dbReference>
<dbReference type="PANTHER" id="PTHR18935">
    <property type="entry name" value="GOLGIN SUBFAMILY A MEMBER 4-LIKE ISOFORM X1"/>
    <property type="match status" value="1"/>
</dbReference>
<dbReference type="PANTHER" id="PTHR18935:SF9">
    <property type="entry name" value="JANUS KINASE AND MICROTUBULE-INTERACTING PROTEIN 3"/>
    <property type="match status" value="1"/>
</dbReference>
<dbReference type="Pfam" id="PF16034">
    <property type="entry name" value="JAKMIP_CC3"/>
    <property type="match status" value="1"/>
</dbReference>
<name>JKIP3_MOUSE</name>
<accession>Q5DTN8</accession>
<accession>Q0VDR4</accession>
<accession>Q0VDR5</accession>
<accession>Q9CU41</accession>